<feature type="chain" id="PRO_0000462059" description="Bacterial E2-like ubiquitin protein BilB">
    <location>
        <begin position="1"/>
        <end position="161"/>
    </location>
</feature>
<feature type="active site" description="Glycyl thioester intermediate" evidence="3">
    <location>
        <position position="113"/>
    </location>
</feature>
<feature type="mutagenesis site" description="No longer resistant to SECphi27." evidence="1">
    <original>C</original>
    <variation>A</variation>
    <location>
        <position position="113"/>
    </location>
</feature>
<comment type="function">
    <text evidence="1 3">Component of the Bil (bacterial ISG15-like) antiviral defense system, composed of BilA, BilB, BilC and BilD. The Bil system specifically conjugates a ubiquitin-like moiety (bilA) to the bacteriophage central tail fiber (CTF, or tip attachment protein J) via reactions involving E1 (bilD) and E2 (bilB). Modifies CTF of phage SECphi27 and SECphi4, which probably interferes with assembly of the phage tail. Also modifies T5 baseplate hub protein pb3 (gene D16), but not gp27 of phage T6 (Bil defends against T6). BilB probably accepts ubiquitin from the BilA-BilD (E1) complex and catalyzes its covalent attachment to target protein (CTF) (Probable) (PubMed:39020165). Bil-encoding bacteria produce mostly defective phage SECphi27, many of which have phage assembly defects, including no tails. SECphi27 phage progeny produced in E.coli with the Bil system inject less DNA into naive host cells, maybe because the phage are less able to adsorb and inject their DNA into host cells.</text>
</comment>
<comment type="function">
    <text evidence="1">Expression of the Bil system in E.coli (strain MG1655) confers about 100-fold resistance to phage SECphi27, SECphi18, SECphi6, SECphi4 and T5, but not to SECphi17. When cells expressing the Bil system are infected by phage SECphi27 at low multiplicity of infection (0.03 MOI) the culture survives, at 3.0 MOI the culture collapses at the same time as cells without the Bil system.</text>
</comment>
<accession>A0A1I1NU27</accession>
<sequence length="161" mass="18625">MISAPSPDHLLLEQDLATPEIRCGEIEERWRHIRTSWPHVFFAVSAPQRPNGPKEFGFRFEYTGYRQTPVTAQLWDLEADAPLPHAKWPTGTYVVPSVFRKDWQQGNCLYIPCDRISIQGHTAWLNDHPSRLWQPARGIICYLEQLYELFNQGDYTGLVSA</sequence>
<evidence type="ECO:0000269" key="1">
    <source>
    </source>
</evidence>
<evidence type="ECO:0000303" key="2">
    <source>
    </source>
</evidence>
<evidence type="ECO:0000305" key="3">
    <source>
    </source>
</evidence>
<evidence type="ECO:0000312" key="4">
    <source>
        <dbReference type="EMBL" id="SFD01174.1"/>
    </source>
</evidence>
<dbReference type="EC" id="2.3.2.-" evidence="3"/>
<dbReference type="EMBL" id="FOLC01000019">
    <property type="protein sequence ID" value="SFD01174.1"/>
    <property type="molecule type" value="Genomic_DNA"/>
</dbReference>
<dbReference type="STRING" id="1801619.SAMN04515619_11957"/>
<dbReference type="Proteomes" id="UP000199381">
    <property type="component" value="Unassembled WGS sequence"/>
</dbReference>
<dbReference type="GO" id="GO:0019787">
    <property type="term" value="F:ubiquitin-like protein transferase activity"/>
    <property type="evidence" value="ECO:0000314"/>
    <property type="project" value="UniProtKB"/>
</dbReference>
<dbReference type="GO" id="GO:0051607">
    <property type="term" value="P:defense response to virus"/>
    <property type="evidence" value="ECO:0000314"/>
    <property type="project" value="UniProtKB"/>
</dbReference>
<dbReference type="GO" id="GO:0032446">
    <property type="term" value="P:protein modification by small protein conjugation"/>
    <property type="evidence" value="ECO:0000314"/>
    <property type="project" value="UniProtKB"/>
</dbReference>
<dbReference type="InterPro" id="IPR056082">
    <property type="entry name" value="DUF7665"/>
</dbReference>
<dbReference type="Pfam" id="PF24702">
    <property type="entry name" value="DUF7665"/>
    <property type="match status" value="1"/>
</dbReference>
<name>BILB_COLS4</name>
<protein>
    <recommendedName>
        <fullName evidence="2">Bacterial E2-like ubiquitin protein BilB</fullName>
        <ecNumber evidence="3">2.3.2.-</ecNumber>
    </recommendedName>
    <alternativeName>
        <fullName>E2 ubiquitin-conjugating enzyme BilB</fullName>
    </alternativeName>
</protein>
<reference evidence="4" key="1">
    <citation type="submission" date="2016-10" db="EMBL/GenBank/DDBJ databases">
        <authorList>
            <person name="de Groot N.N."/>
        </authorList>
    </citation>
    <scope>NUCLEOTIDE SEQUENCE [LARGE SCALE GENOMIC DNA]</scope>
    <source>
        <strain>OK412</strain>
    </source>
</reference>
<reference key="2">
    <citation type="journal article" date="2024" name="Nature">
        <title>Bacteria conjugate ubiquitin-like proteins to interfere with phage assembly.</title>
        <authorList>
            <person name="Hoer J."/>
            <person name="Wolf S.G."/>
            <person name="Sorek R."/>
        </authorList>
    </citation>
    <scope>FUNCTION</scope>
    <scope>PROBABLE ACTIVE SITE</scope>
    <scope>MUTAGENESIS OF CYS-113</scope>
</reference>
<organism>
    <name type="scientific">Collimonas sp. (strain OK412)</name>
    <dbReference type="NCBI Taxonomy" id="1801619"/>
    <lineage>
        <taxon>Bacteria</taxon>
        <taxon>Pseudomonadati</taxon>
        <taxon>Pseudomonadota</taxon>
        <taxon>Betaproteobacteria</taxon>
        <taxon>Burkholderiales</taxon>
        <taxon>Oxalobacteraceae</taxon>
        <taxon>Collimonas</taxon>
    </lineage>
</organism>
<proteinExistence type="evidence at protein level"/>
<gene>
    <name evidence="2" type="primary">bilB</name>
    <name evidence="4" type="ORF">SAMN04515619_11957</name>
</gene>
<keyword id="KW-0051">Antiviral defense</keyword>
<keyword id="KW-0808">Transferase</keyword>
<keyword id="KW-0833">Ubl conjugation pathway</keyword>